<reference evidence="13" key="1">
    <citation type="journal article" date="2000" name="Science">
        <title>The genome sequence of Drosophila melanogaster.</title>
        <authorList>
            <person name="Adams M.D."/>
            <person name="Celniker S.E."/>
            <person name="Holt R.A."/>
            <person name="Evans C.A."/>
            <person name="Gocayne J.D."/>
            <person name="Amanatides P.G."/>
            <person name="Scherer S.E."/>
            <person name="Li P.W."/>
            <person name="Hoskins R.A."/>
            <person name="Galle R.F."/>
            <person name="George R.A."/>
            <person name="Lewis S.E."/>
            <person name="Richards S."/>
            <person name="Ashburner M."/>
            <person name="Henderson S.N."/>
            <person name="Sutton G.G."/>
            <person name="Wortman J.R."/>
            <person name="Yandell M.D."/>
            <person name="Zhang Q."/>
            <person name="Chen L.X."/>
            <person name="Brandon R.C."/>
            <person name="Rogers Y.-H.C."/>
            <person name="Blazej R.G."/>
            <person name="Champe M."/>
            <person name="Pfeiffer B.D."/>
            <person name="Wan K.H."/>
            <person name="Doyle C."/>
            <person name="Baxter E.G."/>
            <person name="Helt G."/>
            <person name="Nelson C.R."/>
            <person name="Miklos G.L.G."/>
            <person name="Abril J.F."/>
            <person name="Agbayani A."/>
            <person name="An H.-J."/>
            <person name="Andrews-Pfannkoch C."/>
            <person name="Baldwin D."/>
            <person name="Ballew R.M."/>
            <person name="Basu A."/>
            <person name="Baxendale J."/>
            <person name="Bayraktaroglu L."/>
            <person name="Beasley E.M."/>
            <person name="Beeson K.Y."/>
            <person name="Benos P.V."/>
            <person name="Berman B.P."/>
            <person name="Bhandari D."/>
            <person name="Bolshakov S."/>
            <person name="Borkova D."/>
            <person name="Botchan M.R."/>
            <person name="Bouck J."/>
            <person name="Brokstein P."/>
            <person name="Brottier P."/>
            <person name="Burtis K.C."/>
            <person name="Busam D.A."/>
            <person name="Butler H."/>
            <person name="Cadieu E."/>
            <person name="Center A."/>
            <person name="Chandra I."/>
            <person name="Cherry J.M."/>
            <person name="Cawley S."/>
            <person name="Dahlke C."/>
            <person name="Davenport L.B."/>
            <person name="Davies P."/>
            <person name="de Pablos B."/>
            <person name="Delcher A."/>
            <person name="Deng Z."/>
            <person name="Mays A.D."/>
            <person name="Dew I."/>
            <person name="Dietz S.M."/>
            <person name="Dodson K."/>
            <person name="Doup L.E."/>
            <person name="Downes M."/>
            <person name="Dugan-Rocha S."/>
            <person name="Dunkov B.C."/>
            <person name="Dunn P."/>
            <person name="Durbin K.J."/>
            <person name="Evangelista C.C."/>
            <person name="Ferraz C."/>
            <person name="Ferriera S."/>
            <person name="Fleischmann W."/>
            <person name="Fosler C."/>
            <person name="Gabrielian A.E."/>
            <person name="Garg N.S."/>
            <person name="Gelbart W.M."/>
            <person name="Glasser K."/>
            <person name="Glodek A."/>
            <person name="Gong F."/>
            <person name="Gorrell J.H."/>
            <person name="Gu Z."/>
            <person name="Guan P."/>
            <person name="Harris M."/>
            <person name="Harris N.L."/>
            <person name="Harvey D.A."/>
            <person name="Heiman T.J."/>
            <person name="Hernandez J.R."/>
            <person name="Houck J."/>
            <person name="Hostin D."/>
            <person name="Houston K.A."/>
            <person name="Howland T.J."/>
            <person name="Wei M.-H."/>
            <person name="Ibegwam C."/>
            <person name="Jalali M."/>
            <person name="Kalush F."/>
            <person name="Karpen G.H."/>
            <person name="Ke Z."/>
            <person name="Kennison J.A."/>
            <person name="Ketchum K.A."/>
            <person name="Kimmel B.E."/>
            <person name="Kodira C.D."/>
            <person name="Kraft C.L."/>
            <person name="Kravitz S."/>
            <person name="Kulp D."/>
            <person name="Lai Z."/>
            <person name="Lasko P."/>
            <person name="Lei Y."/>
            <person name="Levitsky A.A."/>
            <person name="Li J.H."/>
            <person name="Li Z."/>
            <person name="Liang Y."/>
            <person name="Lin X."/>
            <person name="Liu X."/>
            <person name="Mattei B."/>
            <person name="McIntosh T.C."/>
            <person name="McLeod M.P."/>
            <person name="McPherson D."/>
            <person name="Merkulov G."/>
            <person name="Milshina N.V."/>
            <person name="Mobarry C."/>
            <person name="Morris J."/>
            <person name="Moshrefi A."/>
            <person name="Mount S.M."/>
            <person name="Moy M."/>
            <person name="Murphy B."/>
            <person name="Murphy L."/>
            <person name="Muzny D.M."/>
            <person name="Nelson D.L."/>
            <person name="Nelson D.R."/>
            <person name="Nelson K.A."/>
            <person name="Nixon K."/>
            <person name="Nusskern D.R."/>
            <person name="Pacleb J.M."/>
            <person name="Palazzolo M."/>
            <person name="Pittman G.S."/>
            <person name="Pan S."/>
            <person name="Pollard J."/>
            <person name="Puri V."/>
            <person name="Reese M.G."/>
            <person name="Reinert K."/>
            <person name="Remington K."/>
            <person name="Saunders R.D.C."/>
            <person name="Scheeler F."/>
            <person name="Shen H."/>
            <person name="Shue B.C."/>
            <person name="Siden-Kiamos I."/>
            <person name="Simpson M."/>
            <person name="Skupski M.P."/>
            <person name="Smith T.J."/>
            <person name="Spier E."/>
            <person name="Spradling A.C."/>
            <person name="Stapleton M."/>
            <person name="Strong R."/>
            <person name="Sun E."/>
            <person name="Svirskas R."/>
            <person name="Tector C."/>
            <person name="Turner R."/>
            <person name="Venter E."/>
            <person name="Wang A.H."/>
            <person name="Wang X."/>
            <person name="Wang Z.-Y."/>
            <person name="Wassarman D.A."/>
            <person name="Weinstock G.M."/>
            <person name="Weissenbach J."/>
            <person name="Williams S.M."/>
            <person name="Woodage T."/>
            <person name="Worley K.C."/>
            <person name="Wu D."/>
            <person name="Yang S."/>
            <person name="Yao Q.A."/>
            <person name="Ye J."/>
            <person name="Yeh R.-F."/>
            <person name="Zaveri J.S."/>
            <person name="Zhan M."/>
            <person name="Zhang G."/>
            <person name="Zhao Q."/>
            <person name="Zheng L."/>
            <person name="Zheng X.H."/>
            <person name="Zhong F.N."/>
            <person name="Zhong W."/>
            <person name="Zhou X."/>
            <person name="Zhu S.C."/>
            <person name="Zhu X."/>
            <person name="Smith H.O."/>
            <person name="Gibbs R.A."/>
            <person name="Myers E.W."/>
            <person name="Rubin G.M."/>
            <person name="Venter J.C."/>
        </authorList>
    </citation>
    <scope>NUCLEOTIDE SEQUENCE [LARGE SCALE GENOMIC DNA]</scope>
    <source>
        <strain evidence="13">Berkeley</strain>
    </source>
</reference>
<reference evidence="13" key="2">
    <citation type="journal article" date="2002" name="Genome Biol.">
        <title>Annotation of the Drosophila melanogaster euchromatic genome: a systematic review.</title>
        <authorList>
            <person name="Misra S."/>
            <person name="Crosby M.A."/>
            <person name="Mungall C.J."/>
            <person name="Matthews B.B."/>
            <person name="Campbell K.S."/>
            <person name="Hradecky P."/>
            <person name="Huang Y."/>
            <person name="Kaminker J.S."/>
            <person name="Millburn G.H."/>
            <person name="Prochnik S.E."/>
            <person name="Smith C.D."/>
            <person name="Tupy J.L."/>
            <person name="Whitfield E.J."/>
            <person name="Bayraktaroglu L."/>
            <person name="Berman B.P."/>
            <person name="Bettencourt B.R."/>
            <person name="Celniker S.E."/>
            <person name="de Grey A.D.N.J."/>
            <person name="Drysdale R.A."/>
            <person name="Harris N.L."/>
            <person name="Richter J."/>
            <person name="Russo S."/>
            <person name="Schroeder A.J."/>
            <person name="Shu S.Q."/>
            <person name="Stapleton M."/>
            <person name="Yamada C."/>
            <person name="Ashburner M."/>
            <person name="Gelbart W.M."/>
            <person name="Rubin G.M."/>
            <person name="Lewis S.E."/>
        </authorList>
    </citation>
    <scope>GENOME REANNOTATION</scope>
    <source>
        <strain evidence="13">Berkeley</strain>
    </source>
</reference>
<reference evidence="11" key="3">
    <citation type="submission" date="2012-04" db="EMBL/GenBank/DDBJ databases">
        <authorList>
            <person name="Carlson J."/>
            <person name="Booth B."/>
            <person name="Frise E."/>
            <person name="Park S."/>
            <person name="Wan K."/>
            <person name="Yu C."/>
            <person name="Celniker S."/>
        </authorList>
    </citation>
    <scope>NUCLEOTIDE SEQUENCE [LARGE SCALE MRNA]</scope>
</reference>
<reference evidence="9" key="4">
    <citation type="journal article" date="2007" name="Proc. Natl. Acad. Sci. U.S.A.">
        <title>Unique germ-line organelle, nuage, functions to repress selfish genetic elements in Drosophila melanogaster.</title>
        <authorList>
            <person name="Lim A.K."/>
            <person name="Kai T."/>
        </authorList>
    </citation>
    <scope>FUNCTION</scope>
    <scope>SUBCELLULAR LOCATION</scope>
    <scope>TISSUE SPECIFICITY</scope>
    <scope>DISRUPTION PHENOTYPE</scope>
</reference>
<reference evidence="9" key="5">
    <citation type="journal article" date="2007" name="Proc. Natl. Acad. Sci. U.S.A.">
        <authorList>
            <person name="Lim A.K."/>
            <person name="Kai T."/>
        </authorList>
    </citation>
    <scope>ERRATUM OF PUBMED:17428915</scope>
</reference>
<reference evidence="9" key="6">
    <citation type="journal article" date="2011" name="Front. Genet.">
        <title>Gender-Specific Hierarchy in Nuage Localization of PIWI-Interacting RNA Factors in Drosophila.</title>
        <authorList>
            <person name="Nagao A."/>
            <person name="Sato K."/>
            <person name="Nishida K.M."/>
            <person name="Siomi H."/>
            <person name="Siomi M.C."/>
        </authorList>
    </citation>
    <scope>FUNCTION</scope>
    <scope>SUBCELLULAR LOCATION</scope>
    <scope>DEVELOPMENTAL STAGE</scope>
</reference>
<reference evidence="9" key="7">
    <citation type="journal article" date="2015" name="Mol. Cell">
        <title>Krimper Enforces an Antisense Bias on piRNA Pools by Binding AGO3 in the Drosophila Germline.</title>
        <authorList>
            <person name="Sato K."/>
            <person name="Iwasaki Y.W."/>
            <person name="Shibuya A."/>
            <person name="Carninci P."/>
            <person name="Tsuchizawa Y."/>
            <person name="Ishizu H."/>
            <person name="Siomi M.C."/>
            <person name="Siomi H."/>
        </authorList>
    </citation>
    <scope>FUNCTION</scope>
    <scope>INTERACTION WITH AGO3</scope>
</reference>
<reference evidence="9" key="8">
    <citation type="journal article" date="2015" name="Mol. Cell">
        <title>Aub and Ago3 Are Recruited to Nuage through Two Mechanisms to Form a Ping-Pong Complex Assembled by Krimper.</title>
        <authorList>
            <person name="Webster A."/>
            <person name="Li S."/>
            <person name="Hur J.K."/>
            <person name="Wachsmuth M."/>
            <person name="Bois J.S."/>
            <person name="Perkins E.M."/>
            <person name="Patel D.J."/>
            <person name="Aravin A.A."/>
        </authorList>
    </citation>
    <scope>FUNCTION</scope>
    <scope>SUBUNIT</scope>
    <scope>IDENTIFICATION IN THE PING-PONG PIRNA PROCESSING (4P) COMPLEX</scope>
    <scope>INTERACTION WITH AGO3 AND AUB</scope>
    <scope>SUBCELLULAR LOCATION</scope>
    <scope>DOMAIN TUDOR</scope>
</reference>
<reference evidence="14 15 16" key="9">
    <citation type="journal article" date="2021" name="Nat. Commun.">
        <title>Binding of guide piRNA triggers methylation of the unstructured N-terminal region of Aub leading to assembly of the piRNA amplification complex.</title>
        <authorList>
            <person name="Huang X."/>
            <person name="Hu H."/>
            <person name="Webster A."/>
            <person name="Zou F."/>
            <person name="Du J."/>
            <person name="Patel D.J."/>
            <person name="Sachidanandam R."/>
            <person name="Toth K.F."/>
            <person name="Aravin A.A."/>
            <person name="Li S."/>
        </authorList>
    </citation>
    <scope>X-RAY CRYSTALLOGRAPHY (2.10 ANGSTROMS) OF 272-512</scope>
    <scope>FUNCTION</scope>
    <scope>INTERACTION WITH AUB AND AGO3</scope>
    <scope>DOMAIN TUDOR</scope>
</reference>
<evidence type="ECO:0000255" key="1">
    <source>
        <dbReference type="PROSITE-ProRule" id="PRU00211"/>
    </source>
</evidence>
<evidence type="ECO:0000255" key="2">
    <source>
        <dbReference type="PROSITE-ProRule" id="PRU00723"/>
    </source>
</evidence>
<evidence type="ECO:0000269" key="3">
    <source>
    </source>
</evidence>
<evidence type="ECO:0000269" key="4">
    <source>
    </source>
</evidence>
<evidence type="ECO:0000269" key="5">
    <source>
    </source>
</evidence>
<evidence type="ECO:0000269" key="6">
    <source>
    </source>
</evidence>
<evidence type="ECO:0000269" key="7">
    <source>
    </source>
</evidence>
<evidence type="ECO:0000303" key="8">
    <source>
    </source>
</evidence>
<evidence type="ECO:0000305" key="9"/>
<evidence type="ECO:0000305" key="10">
    <source>
    </source>
</evidence>
<evidence type="ECO:0000312" key="11">
    <source>
        <dbReference type="EMBL" id="AFH41855.1"/>
    </source>
</evidence>
<evidence type="ECO:0000312" key="12">
    <source>
        <dbReference type="FlyBase" id="FBgn0034098"/>
    </source>
</evidence>
<evidence type="ECO:0000312" key="13">
    <source>
        <dbReference type="Proteomes" id="UP000000803"/>
    </source>
</evidence>
<evidence type="ECO:0007744" key="14">
    <source>
        <dbReference type="PDB" id="7CFB"/>
    </source>
</evidence>
<evidence type="ECO:0007744" key="15">
    <source>
        <dbReference type="PDB" id="7CFC"/>
    </source>
</evidence>
<evidence type="ECO:0007744" key="16">
    <source>
        <dbReference type="PDB" id="7CFD"/>
    </source>
</evidence>
<evidence type="ECO:0007829" key="17">
    <source>
        <dbReference type="PDB" id="7CFB"/>
    </source>
</evidence>
<evidence type="ECO:0007829" key="18">
    <source>
        <dbReference type="PDB" id="7CFD"/>
    </source>
</evidence>
<keyword id="KW-0002">3D-structure</keyword>
<keyword id="KW-0963">Cytoplasm</keyword>
<keyword id="KW-0221">Differentiation</keyword>
<keyword id="KW-0479">Metal-binding</keyword>
<keyword id="KW-0896">Oogenesis</keyword>
<keyword id="KW-1185">Reference proteome</keyword>
<keyword id="KW-0862">Zinc</keyword>
<keyword id="KW-0863">Zinc-finger</keyword>
<organism evidence="13">
    <name type="scientific">Drosophila melanogaster</name>
    <name type="common">Fruit fly</name>
    <dbReference type="NCBI Taxonomy" id="7227"/>
    <lineage>
        <taxon>Eukaryota</taxon>
        <taxon>Metazoa</taxon>
        <taxon>Ecdysozoa</taxon>
        <taxon>Arthropoda</taxon>
        <taxon>Hexapoda</taxon>
        <taxon>Insecta</taxon>
        <taxon>Pterygota</taxon>
        <taxon>Neoptera</taxon>
        <taxon>Endopterygota</taxon>
        <taxon>Diptera</taxon>
        <taxon>Brachycera</taxon>
        <taxon>Muscomorpha</taxon>
        <taxon>Ephydroidea</taxon>
        <taxon>Drosophilidae</taxon>
        <taxon>Drosophila</taxon>
        <taxon>Sophophora</taxon>
    </lineage>
</organism>
<name>KRIMP_DROME</name>
<feature type="chain" id="PRO_0000461033" description="Tudor domain-containing protein krimp">
    <location>
        <begin position="1"/>
        <end position="746"/>
    </location>
</feature>
<feature type="domain" description="Tudor" evidence="1">
    <location>
        <begin position="613"/>
        <end position="670"/>
    </location>
</feature>
<feature type="zinc finger region" description="C3H1-type" evidence="2">
    <location>
        <begin position="511"/>
        <end position="540"/>
    </location>
</feature>
<feature type="region of interest" description="Involved in homooligomerization" evidence="6">
    <location>
        <begin position="1"/>
        <end position="310"/>
    </location>
</feature>
<feature type="region of interest" description="Non-canonical tudor domain" evidence="10">
    <location>
        <begin position="311"/>
        <end position="489"/>
    </location>
</feature>
<feature type="helix" evidence="17">
    <location>
        <begin position="300"/>
        <end position="306"/>
    </location>
</feature>
<feature type="helix" evidence="17">
    <location>
        <begin position="311"/>
        <end position="313"/>
    </location>
</feature>
<feature type="strand" evidence="17">
    <location>
        <begin position="318"/>
        <end position="327"/>
    </location>
</feature>
<feature type="turn" evidence="17">
    <location>
        <begin position="329"/>
        <end position="331"/>
    </location>
</feature>
<feature type="strand" evidence="17">
    <location>
        <begin position="334"/>
        <end position="337"/>
    </location>
</feature>
<feature type="helix" evidence="17">
    <location>
        <begin position="341"/>
        <end position="343"/>
    </location>
</feature>
<feature type="helix" evidence="17">
    <location>
        <begin position="344"/>
        <end position="350"/>
    </location>
</feature>
<feature type="strand" evidence="17">
    <location>
        <begin position="357"/>
        <end position="361"/>
    </location>
</feature>
<feature type="strand" evidence="17">
    <location>
        <begin position="369"/>
        <end position="373"/>
    </location>
</feature>
<feature type="turn" evidence="17">
    <location>
        <begin position="374"/>
        <end position="377"/>
    </location>
</feature>
<feature type="strand" evidence="17">
    <location>
        <begin position="378"/>
        <end position="387"/>
    </location>
</feature>
<feature type="strand" evidence="17">
    <location>
        <begin position="391"/>
        <end position="397"/>
    </location>
</feature>
<feature type="turn" evidence="17">
    <location>
        <begin position="398"/>
        <end position="401"/>
    </location>
</feature>
<feature type="strand" evidence="17">
    <location>
        <begin position="402"/>
        <end position="406"/>
    </location>
</feature>
<feature type="strand" evidence="17">
    <location>
        <begin position="412"/>
        <end position="414"/>
    </location>
</feature>
<feature type="helix" evidence="17">
    <location>
        <begin position="417"/>
        <end position="420"/>
    </location>
</feature>
<feature type="strand" evidence="17">
    <location>
        <begin position="427"/>
        <end position="431"/>
    </location>
</feature>
<feature type="helix" evidence="17">
    <location>
        <begin position="436"/>
        <end position="439"/>
    </location>
</feature>
<feature type="helix" evidence="17">
    <location>
        <begin position="440"/>
        <end position="442"/>
    </location>
</feature>
<feature type="strand" evidence="17">
    <location>
        <begin position="445"/>
        <end position="454"/>
    </location>
</feature>
<feature type="strand" evidence="17">
    <location>
        <begin position="459"/>
        <end position="464"/>
    </location>
</feature>
<feature type="helix" evidence="17">
    <location>
        <begin position="485"/>
        <end position="498"/>
    </location>
</feature>
<feature type="helix" evidence="17">
    <location>
        <begin position="503"/>
        <end position="506"/>
    </location>
</feature>
<feature type="strand" evidence="18">
    <location>
        <begin position="571"/>
        <end position="581"/>
    </location>
</feature>
<feature type="strand" evidence="18">
    <location>
        <begin position="584"/>
        <end position="589"/>
    </location>
</feature>
<feature type="helix" evidence="18">
    <location>
        <begin position="600"/>
        <end position="602"/>
    </location>
</feature>
<feature type="helix" evidence="18">
    <location>
        <begin position="605"/>
        <end position="608"/>
    </location>
</feature>
<feature type="strand" evidence="18">
    <location>
        <begin position="619"/>
        <end position="623"/>
    </location>
</feature>
<feature type="strand" evidence="18">
    <location>
        <begin position="629"/>
        <end position="637"/>
    </location>
</feature>
<feature type="strand" evidence="18">
    <location>
        <begin position="642"/>
        <end position="646"/>
    </location>
</feature>
<feature type="turn" evidence="18">
    <location>
        <begin position="647"/>
        <end position="649"/>
    </location>
</feature>
<feature type="strand" evidence="18">
    <location>
        <begin position="652"/>
        <end position="655"/>
    </location>
</feature>
<feature type="helix" evidence="18">
    <location>
        <begin position="657"/>
        <end position="659"/>
    </location>
</feature>
<feature type="strand" evidence="18">
    <location>
        <begin position="660"/>
        <end position="662"/>
    </location>
</feature>
<feature type="helix" evidence="18">
    <location>
        <begin position="665"/>
        <end position="669"/>
    </location>
</feature>
<feature type="strand" evidence="18">
    <location>
        <begin position="675"/>
        <end position="679"/>
    </location>
</feature>
<feature type="strand" evidence="18">
    <location>
        <begin position="682"/>
        <end position="684"/>
    </location>
</feature>
<feature type="helix" evidence="18">
    <location>
        <begin position="690"/>
        <end position="704"/>
    </location>
</feature>
<feature type="strand" evidence="18">
    <location>
        <begin position="708"/>
        <end position="716"/>
    </location>
</feature>
<feature type="strand" evidence="18">
    <location>
        <begin position="718"/>
        <end position="724"/>
    </location>
</feature>
<feature type="turn" evidence="18">
    <location>
        <begin position="727"/>
        <end position="730"/>
    </location>
</feature>
<feature type="helix" evidence="18">
    <location>
        <begin position="731"/>
        <end position="738"/>
    </location>
</feature>
<feature type="strand" evidence="18">
    <location>
        <begin position="741"/>
        <end position="744"/>
    </location>
</feature>
<accession>A1ZAC4</accession>
<gene>
    <name evidence="8 12" type="primary">krimp</name>
    <name evidence="12" type="synonym">mtc</name>
    <name evidence="12" type="ORF">CG15707</name>
</gene>
<dbReference type="EMBL" id="AE013599">
    <property type="protein sequence ID" value="AAF58035.2"/>
    <property type="molecule type" value="Genomic_DNA"/>
</dbReference>
<dbReference type="EMBL" id="BT133395">
    <property type="protein sequence ID" value="AFH41855.1"/>
    <property type="molecule type" value="mRNA"/>
</dbReference>
<dbReference type="RefSeq" id="NP_611103.2">
    <property type="nucleotide sequence ID" value="NM_137259.4"/>
</dbReference>
<dbReference type="PDB" id="7CFB">
    <property type="method" value="X-ray"/>
    <property type="resolution" value="2.10 A"/>
    <property type="chains" value="A/B=272-512"/>
</dbReference>
<dbReference type="PDB" id="7CFC">
    <property type="method" value="X-ray"/>
    <property type="resolution" value="2.40 A"/>
    <property type="chains" value="A/B/C/D/E=272-512"/>
</dbReference>
<dbReference type="PDB" id="7CFD">
    <property type="method" value="X-ray"/>
    <property type="resolution" value="2.70 A"/>
    <property type="chains" value="A/B/C/D/E/F/G/H=562-746"/>
</dbReference>
<dbReference type="PDBsum" id="7CFB"/>
<dbReference type="PDBsum" id="7CFC"/>
<dbReference type="PDBsum" id="7CFD"/>
<dbReference type="SMR" id="A1ZAC4"/>
<dbReference type="FunCoup" id="A1ZAC4">
    <property type="interactions" value="60"/>
</dbReference>
<dbReference type="IntAct" id="A1ZAC4">
    <property type="interactions" value="3"/>
</dbReference>
<dbReference type="STRING" id="7227.FBpp0086333"/>
<dbReference type="PaxDb" id="7227-FBpp0086333"/>
<dbReference type="EnsemblMetazoa" id="FBtr0087189">
    <property type="protein sequence ID" value="FBpp0086333"/>
    <property type="gene ID" value="FBgn0034098"/>
</dbReference>
<dbReference type="GeneID" id="36804"/>
<dbReference type="KEGG" id="dme:Dmel_CG15707"/>
<dbReference type="UCSC" id="CG15707-RA">
    <property type="organism name" value="d. melanogaster"/>
</dbReference>
<dbReference type="AGR" id="FB:FBgn0034098"/>
<dbReference type="CTD" id="36804"/>
<dbReference type="FlyBase" id="FBgn0034098">
    <property type="gene designation" value="krimp"/>
</dbReference>
<dbReference type="VEuPathDB" id="VectorBase:FBgn0034098"/>
<dbReference type="eggNOG" id="KOG2039">
    <property type="taxonomic scope" value="Eukaryota"/>
</dbReference>
<dbReference type="HOGENOM" id="CLU_369740_0_0_1"/>
<dbReference type="InParanoid" id="A1ZAC4"/>
<dbReference type="OMA" id="RHYDPKL"/>
<dbReference type="OrthoDB" id="10052065at2759"/>
<dbReference type="BioGRID-ORCS" id="36804">
    <property type="hits" value="0 hits in 1 CRISPR screen"/>
</dbReference>
<dbReference type="GenomeRNAi" id="36804"/>
<dbReference type="Proteomes" id="UP000000803">
    <property type="component" value="Chromosome 2R"/>
</dbReference>
<dbReference type="Bgee" id="FBgn0034098">
    <property type="expression patterns" value="Expressed in egg cell and 22 other cell types or tissues"/>
</dbReference>
<dbReference type="ExpressionAtlas" id="A1ZAC4">
    <property type="expression patterns" value="baseline and differential"/>
</dbReference>
<dbReference type="GO" id="GO:0043186">
    <property type="term" value="C:P granule"/>
    <property type="evidence" value="ECO:0000314"/>
    <property type="project" value="UniProtKB"/>
</dbReference>
<dbReference type="GO" id="GO:0048471">
    <property type="term" value="C:perinuclear region of cytoplasm"/>
    <property type="evidence" value="ECO:0000314"/>
    <property type="project" value="FlyBase"/>
</dbReference>
<dbReference type="GO" id="GO:0008270">
    <property type="term" value="F:zinc ion binding"/>
    <property type="evidence" value="ECO:0007669"/>
    <property type="project" value="UniProtKB-KW"/>
</dbReference>
<dbReference type="GO" id="GO:0007319">
    <property type="term" value="P:negative regulation of oskar mRNA translation"/>
    <property type="evidence" value="ECO:0000315"/>
    <property type="project" value="FlyBase"/>
</dbReference>
<dbReference type="GO" id="GO:0007310">
    <property type="term" value="P:oocyte dorsal/ventral axis specification"/>
    <property type="evidence" value="ECO:0000315"/>
    <property type="project" value="FlyBase"/>
</dbReference>
<dbReference type="GO" id="GO:0030717">
    <property type="term" value="P:oocyte karyosome formation"/>
    <property type="evidence" value="ECO:0000315"/>
    <property type="project" value="FlyBase"/>
</dbReference>
<dbReference type="GO" id="GO:0140965">
    <property type="term" value="P:secondary piRNA processing"/>
    <property type="evidence" value="ECO:0000315"/>
    <property type="project" value="FlyBase"/>
</dbReference>
<dbReference type="GO" id="GO:0141009">
    <property type="term" value="P:transposable element silencing by piRNA-mediated mRNA destabilization"/>
    <property type="evidence" value="ECO:0000315"/>
    <property type="project" value="FlyBase"/>
</dbReference>
<dbReference type="CDD" id="cd20379">
    <property type="entry name" value="Tudor_dTUD-like"/>
    <property type="match status" value="1"/>
</dbReference>
<dbReference type="Gene3D" id="2.30.30.140">
    <property type="match status" value="2"/>
</dbReference>
<dbReference type="Gene3D" id="2.40.50.90">
    <property type="match status" value="1"/>
</dbReference>
<dbReference type="InterPro" id="IPR035437">
    <property type="entry name" value="SNase_OB-fold_sf"/>
</dbReference>
<dbReference type="InterPro" id="IPR002999">
    <property type="entry name" value="Tudor"/>
</dbReference>
<dbReference type="InterPro" id="IPR050621">
    <property type="entry name" value="Tudor_domain_containing"/>
</dbReference>
<dbReference type="InterPro" id="IPR056482">
    <property type="entry name" value="Tudor_krimper_1st"/>
</dbReference>
<dbReference type="InterPro" id="IPR000571">
    <property type="entry name" value="Znf_CCCH"/>
</dbReference>
<dbReference type="PANTHER" id="PTHR22948:SF29">
    <property type="entry name" value="FI02030P-RELATED"/>
    <property type="match status" value="1"/>
</dbReference>
<dbReference type="PANTHER" id="PTHR22948">
    <property type="entry name" value="TUDOR DOMAIN CONTAINING PROTEIN"/>
    <property type="match status" value="1"/>
</dbReference>
<dbReference type="Pfam" id="PF00567">
    <property type="entry name" value="TUDOR"/>
    <property type="match status" value="1"/>
</dbReference>
<dbReference type="Pfam" id="PF24047">
    <property type="entry name" value="Tudor_krimper_1st"/>
    <property type="match status" value="1"/>
</dbReference>
<dbReference type="SMART" id="SM00333">
    <property type="entry name" value="TUDOR"/>
    <property type="match status" value="1"/>
</dbReference>
<dbReference type="SUPFAM" id="SSF63748">
    <property type="entry name" value="Tudor/PWWP/MBT"/>
    <property type="match status" value="2"/>
</dbReference>
<dbReference type="PROSITE" id="PS50304">
    <property type="entry name" value="TUDOR"/>
    <property type="match status" value="1"/>
</dbReference>
<dbReference type="PROSITE" id="PS50103">
    <property type="entry name" value="ZF_C3H1"/>
    <property type="match status" value="1"/>
</dbReference>
<comment type="function">
    <text evidence="3 4 5 6 7">Stable structural component of the perinuclear meiotic nuage, a germline-specific subcellular membraneless ribonucleoprotein compartment involved in production of transposable element-repressing Piwi-interacting RNA (piRNA)-induced silencing complexes (piRISCs), which are essential for maintaining germline integrity during oogenesis (PubMed:17428915, PubMed:26212455, PubMed:26295961). Scaffold component of the ping-pong piRNA processing (4P) complex that recruits the Piwi proteins aub and AGO3 to specific subregions of the nuage where it coordinates their activity in the ping-pong amplification step of secondary piRNA biogenesis (PubMed:26295961, PubMed:34210982). Binds methylated aub, which is associated with piRNA, and unmethylated AGO3, which is not associated with piRNA, bringing the Piwi proteins into close proximity and facilitating the loading of freshly cut piRNAs generated by aub onto AGO3 (PubMed:34210982). Promotes asymmetric ping-pong amplification by aub and AGO3 to bias production towards antisense piRNAs capable of silencing transposable elements (PubMed:26212455). Required for symmetrical dimethylation of AGO3, probably by recruitment to the nuage where methylosome components are located; dimethylation promotes AGO3 dissociation and interaction with other tudor-domain containing proteins such as tud (PubMed:26212455). Required for the recruitment of mael to the perinuclear meiotic nuage (PubMed:17428915). Required for the recruitment of aub to the nuage in testes but not in ovaries (PubMed:22303351). Involved in repression of long interspersed nuclear elements (LINEs) including HeT-A, I-element LINEs and possibly mst40, but not TART LINEs (PubMed:17428915).</text>
</comment>
<comment type="subunit">
    <text evidence="5 6 7">Homooligomerizes (via N-terminus) (PubMed:26295961). Component of the ping-pong piRNA processing (4P) complex consisting of krimp, aub and AGO3; a single molecule of krimp can bind both aub and AGO3 without the need for homooligomerization (PubMed:26295961, PubMed:34210982). Interacts (via canonical tudor domain) with aub (via N-terminus when symmetrically dimethylated on arginine residues) (PubMed:26295961, PubMed:34210982). Interacts (via non-canonical tudor domain) with AGO3 (via N-terminus when unmethylated on arginine residues); this interaction leads to symmetrical dimethylation on AGO3 arginine residues and its subsequent dissociation from krimp (PubMed:26212455, PubMed:26295961, PubMed:34210982). Krimp associated AGO3 is mostly free of piRNA binding and the interaction plays an important role in the loading of AGO3 with piRNAs; piRNA binding stimulates methylation of ACO3 by the csul/PRMT5 methylosome complex and promotes dissociation of the two proteins (PubMed:26212455, PubMed:26295961, PubMed:34210982).</text>
</comment>
<comment type="subcellular location">
    <subcellularLocation>
        <location evidence="3 4 6">Cytoplasm</location>
    </subcellularLocation>
    <subcellularLocation>
        <location evidence="3 4 6">Cytoplasm</location>
        <location evidence="3 4 6">Perinuclear region</location>
    </subcellularLocation>
    <subcellularLocation>
        <location evidence="3 4 6">Cytoplasm</location>
        <location evidence="3 4 6">Cytoplasmic ribonucleoprotein granule</location>
    </subcellularLocation>
    <text evidence="3 4 6">Component of the perinuclear meiotic nuage (also known as germline granule or P granule), a germline-specific membraneless ribonucleoprotein biocondensate involved in post-transcriptional regulation of transposons and mRNAs (PubMed:17428915, PubMed:22303351, PubMed:26295961). Colocalizes with vas/vasa in the perinuclear nuage but not the pole plasm (PubMed:17428915). Localization to the nuage is dependent on spn-E, vas and aub but not mael or AGO3 (PubMed:17428915, PubMed:22303351). Localization to the nuage does not require tub in ovaries but does in testes; tub and aub are required for krimp protein stability in testes (PubMed:22303351).</text>
</comment>
<comment type="tissue specificity">
    <text evidence="3">Widely expressed in female germline cells, including differentiating germ cells in germarium and egg chambers (at protein level).</text>
</comment>
<comment type="developmental stage">
    <text evidence="4">Expressed in germline cells at early stages of spermatogenesis and throughout oogenesis (at protein level).</text>
</comment>
<comment type="domain">
    <text evidence="6 7 10">Possesses two tudor domains, a C-terminal canonical tudor domain and a central non-canonical tudor domain (Probable) (PubMed:34210982). Both tudor domains can interact with Piwi proteins allowing the simultaneous binding of aub and AGO3; this brings them in close proximity to facilitate their role in ping-pong ampification of piRNAs (PubMed:26295961, PubMed:34210982). The canonical tudor domain possesses a hydrophobic pocket that preferentially binds methylated aub; the interaction requires symmetrical methylation on at least one aub N-terminal arginine (PubMed:26295961, PubMed:34210982). The non-canonical tudor domain possesses a hydrophilic binding pocket that preferentially binds unmethylated AGO3; methylation on any of the AGO3 N-terminal arginines disrupts this interaction (PubMed:34210982). The differential binding preference ensures recruitment of one piRNA loaded (aub) and one unloaded (AGO3) Piwi-protein; the methylation state of the Piwi proteins acts as an indicator of their piRNA binding state (PubMed:34210982).</text>
</comment>
<comment type="disruption phenotype">
    <text evidence="3">Females are sterile due to defective oogenesis; defects in germ cell meiotic progression and loss of dorso-ventral oocyte polarity (PubMed:17428915). Oocyte nucleus fails to form a compact karyosome by stage 3 of oogenesis (PubMed:17428915). Precocious translation of osk mRNA prior to stage 9 of oogenesis, probably due to defective RNA silencing (PubMed:17428915).</text>
</comment>
<comment type="similarity">
    <text evidence="9">Belongs to the Tudor domain containing protein family.</text>
</comment>
<protein>
    <recommendedName>
        <fullName evidence="9">Tudor domain-containing protein krimp</fullName>
    </recommendedName>
    <alternativeName>
        <fullName evidence="8 12">Protein krimper</fullName>
    </alternativeName>
</protein>
<sequence length="746" mass="83989">MNLEDISMIMKLFDSNMHKLQGNLRSYQTEMHQIHKELTEKLSHADLLYRSLIPLHDHLVASLSEVNAHVMKLNVQLHINRQSVRLGDYEYYEKSIDNPYSSIRSGLQAIEKPGCAEAICQSSKPAFVECLPSSTSEEVPVVAVQEASSTNQLDAISVVNENLSEERDATPQPLAVSKNMEETMPSNPFHEQLEGSLEEIPVGSKIVVETEKANNPVRSEASAPATSDNQSLLAAKQGTQTIGTGICNKISKSTINMPNNWQLENPTEVTAASIEKVNKLPKSPRNRFLLPPKGGTETTRRDIYNQILKDMAAFPENTIVTAVLASVDVTDNCAYVAKWDESSDRIKKVLQRQLPLQELDQLPDYGDIFAVLDSINNIITRITINSSSAGGGYDAYLIDFGEHIHFDGNETIFKLPDDIKRLPAQAIRCDLINCDIANMHCFVNTYIKIRVHENNNSTLVAEPVIDRLSRPTKTNTTKYPAGITEDDMAMLNEIDESTSDPLKAVLGFRPKDEQRICRHYDPKLNGCFKGNNCRFAHEPFAPNGATKDVELARALPETIFDTTVHFEIGSIVGILITFINGPTEVYGQFLDGSPPLVWDKKDVPENKRTFKSKPRLLDIVLALYSDGCFYRAQIIDEFPSEYMIFYVDYGNTEFVPLSCLAPCENVDSFKPHRVFSFHIEGIVRSKNLTHQKTIECIEYLKSKLLNTEMNVHLVQRLPDGFLIRFLDDWKYIPEQLLQRNYAQVSQ</sequence>
<proteinExistence type="evidence at protein level"/>